<organism>
    <name type="scientific">Clostridium botulinum (strain 657 / Type Ba4)</name>
    <dbReference type="NCBI Taxonomy" id="515621"/>
    <lineage>
        <taxon>Bacteria</taxon>
        <taxon>Bacillati</taxon>
        <taxon>Bacillota</taxon>
        <taxon>Clostridia</taxon>
        <taxon>Eubacteriales</taxon>
        <taxon>Clostridiaceae</taxon>
        <taxon>Clostridium</taxon>
    </lineage>
</organism>
<keyword id="KW-0067">ATP-binding</keyword>
<keyword id="KW-0520">NAD</keyword>
<keyword id="KW-0547">Nucleotide-binding</keyword>
<keyword id="KW-0548">Nucleotidyltransferase</keyword>
<keyword id="KW-0662">Pyridine nucleotide biosynthesis</keyword>
<keyword id="KW-0808">Transferase</keyword>
<gene>
    <name evidence="1" type="primary">nadD</name>
    <name type="ordered locus">CLJ_B3241</name>
</gene>
<name>NADD_CLOB6</name>
<proteinExistence type="inferred from homology"/>
<accession>C3L3J1</accession>
<comment type="function">
    <text evidence="1">Catalyzes the reversible adenylation of nicotinate mononucleotide (NaMN) to nicotinic acid adenine dinucleotide (NaAD).</text>
</comment>
<comment type="catalytic activity">
    <reaction evidence="1">
        <text>nicotinate beta-D-ribonucleotide + ATP + H(+) = deamido-NAD(+) + diphosphate</text>
        <dbReference type="Rhea" id="RHEA:22860"/>
        <dbReference type="ChEBI" id="CHEBI:15378"/>
        <dbReference type="ChEBI" id="CHEBI:30616"/>
        <dbReference type="ChEBI" id="CHEBI:33019"/>
        <dbReference type="ChEBI" id="CHEBI:57502"/>
        <dbReference type="ChEBI" id="CHEBI:58437"/>
        <dbReference type="EC" id="2.7.7.18"/>
    </reaction>
</comment>
<comment type="pathway">
    <text evidence="1">Cofactor biosynthesis; NAD(+) biosynthesis; deamido-NAD(+) from nicotinate D-ribonucleotide: step 1/1.</text>
</comment>
<comment type="similarity">
    <text evidence="1">Belongs to the NadD family.</text>
</comment>
<protein>
    <recommendedName>
        <fullName evidence="1">Probable nicotinate-nucleotide adenylyltransferase</fullName>
        <ecNumber evidence="1">2.7.7.18</ecNumber>
    </recommendedName>
    <alternativeName>
        <fullName evidence="1">Deamido-NAD(+) diphosphorylase</fullName>
    </alternativeName>
    <alternativeName>
        <fullName evidence="1">Deamido-NAD(+) pyrophosphorylase</fullName>
    </alternativeName>
    <alternativeName>
        <fullName evidence="1">Nicotinate mononucleotide adenylyltransferase</fullName>
        <shortName evidence="1">NaMN adenylyltransferase</shortName>
    </alternativeName>
</protein>
<evidence type="ECO:0000255" key="1">
    <source>
        <dbReference type="HAMAP-Rule" id="MF_00244"/>
    </source>
</evidence>
<reference key="1">
    <citation type="submission" date="2008-05" db="EMBL/GenBank/DDBJ databases">
        <title>Genome sequence of Clostridium botulinum Ba4 strain 657.</title>
        <authorList>
            <person name="Shrivastava S."/>
            <person name="Brown J.L."/>
            <person name="Bruce D."/>
            <person name="Detter C."/>
            <person name="Munk C."/>
            <person name="Smith L.A."/>
            <person name="Smith T.J."/>
            <person name="Sutton G."/>
            <person name="Brettin T.S."/>
        </authorList>
    </citation>
    <scope>NUCLEOTIDE SEQUENCE [LARGE SCALE GENOMIC DNA]</scope>
    <source>
        <strain>657 / Type Ba4</strain>
    </source>
</reference>
<dbReference type="EC" id="2.7.7.18" evidence="1"/>
<dbReference type="EMBL" id="CP001083">
    <property type="protein sequence ID" value="ACQ54237.1"/>
    <property type="molecule type" value="Genomic_DNA"/>
</dbReference>
<dbReference type="RefSeq" id="WP_003360011.1">
    <property type="nucleotide sequence ID" value="NC_012658.1"/>
</dbReference>
<dbReference type="SMR" id="C3L3J1"/>
<dbReference type="GeneID" id="5187236"/>
<dbReference type="KEGG" id="cbi:CLJ_B3241"/>
<dbReference type="HOGENOM" id="CLU_069765_3_2_9"/>
<dbReference type="UniPathway" id="UPA00253">
    <property type="reaction ID" value="UER00332"/>
</dbReference>
<dbReference type="Proteomes" id="UP000002333">
    <property type="component" value="Chromosome"/>
</dbReference>
<dbReference type="GO" id="GO:0005524">
    <property type="term" value="F:ATP binding"/>
    <property type="evidence" value="ECO:0007669"/>
    <property type="project" value="UniProtKB-KW"/>
</dbReference>
<dbReference type="GO" id="GO:0004515">
    <property type="term" value="F:nicotinate-nucleotide adenylyltransferase activity"/>
    <property type="evidence" value="ECO:0007669"/>
    <property type="project" value="UniProtKB-UniRule"/>
</dbReference>
<dbReference type="GO" id="GO:0009435">
    <property type="term" value="P:NAD biosynthetic process"/>
    <property type="evidence" value="ECO:0007669"/>
    <property type="project" value="UniProtKB-UniRule"/>
</dbReference>
<dbReference type="CDD" id="cd02165">
    <property type="entry name" value="NMNAT"/>
    <property type="match status" value="1"/>
</dbReference>
<dbReference type="FunFam" id="3.40.50.620:FF:000255">
    <property type="entry name" value="Probable nicotinate-nucleotide adenylyltransferase"/>
    <property type="match status" value="1"/>
</dbReference>
<dbReference type="Gene3D" id="3.40.50.620">
    <property type="entry name" value="HUPs"/>
    <property type="match status" value="1"/>
</dbReference>
<dbReference type="HAMAP" id="MF_00244">
    <property type="entry name" value="NaMN_adenylyltr"/>
    <property type="match status" value="1"/>
</dbReference>
<dbReference type="InterPro" id="IPR004821">
    <property type="entry name" value="Cyt_trans-like"/>
</dbReference>
<dbReference type="InterPro" id="IPR005248">
    <property type="entry name" value="NadD/NMNAT"/>
</dbReference>
<dbReference type="InterPro" id="IPR014729">
    <property type="entry name" value="Rossmann-like_a/b/a_fold"/>
</dbReference>
<dbReference type="NCBIfam" id="TIGR00125">
    <property type="entry name" value="cyt_tran_rel"/>
    <property type="match status" value="1"/>
</dbReference>
<dbReference type="NCBIfam" id="TIGR00482">
    <property type="entry name" value="nicotinate (nicotinamide) nucleotide adenylyltransferase"/>
    <property type="match status" value="1"/>
</dbReference>
<dbReference type="NCBIfam" id="NF000840">
    <property type="entry name" value="PRK00071.1-3"/>
    <property type="match status" value="1"/>
</dbReference>
<dbReference type="PANTHER" id="PTHR39321">
    <property type="entry name" value="NICOTINATE-NUCLEOTIDE ADENYLYLTRANSFERASE-RELATED"/>
    <property type="match status" value="1"/>
</dbReference>
<dbReference type="PANTHER" id="PTHR39321:SF3">
    <property type="entry name" value="PHOSPHOPANTETHEINE ADENYLYLTRANSFERASE"/>
    <property type="match status" value="1"/>
</dbReference>
<dbReference type="Pfam" id="PF01467">
    <property type="entry name" value="CTP_transf_like"/>
    <property type="match status" value="1"/>
</dbReference>
<dbReference type="SUPFAM" id="SSF52374">
    <property type="entry name" value="Nucleotidylyl transferase"/>
    <property type="match status" value="1"/>
</dbReference>
<sequence length="201" mass="23946">MINKAILGGTFDPIHNAHINVAYEALERFNLEEVIFIPAGNPPHKIKLKKTPAHIRYEMVKLAIEKETRFSISDFEIKSKGLSYTYRTLKHFKEKEPETNWYFITGEDCLSYLEHWKYIDEIFNICNFVIFSREGFKEKEEIIKKKKSILLKYRKEILFMDASILDISSTKIRNRIKEGKEVSFYMPDKVYKFILQNNLYK</sequence>
<feature type="chain" id="PRO_1000204481" description="Probable nicotinate-nucleotide adenylyltransferase">
    <location>
        <begin position="1"/>
        <end position="201"/>
    </location>
</feature>